<feature type="chain" id="PRO_1000198948" description="Aspartate--tRNA(Asp/Asn) ligase">
    <location>
        <begin position="1"/>
        <end position="596"/>
    </location>
</feature>
<feature type="region of interest" description="Aspartate" evidence="1">
    <location>
        <begin position="199"/>
        <end position="202"/>
    </location>
</feature>
<feature type="binding site" evidence="1">
    <location>
        <position position="175"/>
    </location>
    <ligand>
        <name>L-aspartate</name>
        <dbReference type="ChEBI" id="CHEBI:29991"/>
    </ligand>
</feature>
<feature type="binding site" evidence="1">
    <location>
        <begin position="221"/>
        <end position="223"/>
    </location>
    <ligand>
        <name>ATP</name>
        <dbReference type="ChEBI" id="CHEBI:30616"/>
    </ligand>
</feature>
<feature type="binding site" evidence="1">
    <location>
        <position position="221"/>
    </location>
    <ligand>
        <name>L-aspartate</name>
        <dbReference type="ChEBI" id="CHEBI:29991"/>
    </ligand>
</feature>
<feature type="binding site" evidence="1">
    <location>
        <position position="454"/>
    </location>
    <ligand>
        <name>L-aspartate</name>
        <dbReference type="ChEBI" id="CHEBI:29991"/>
    </ligand>
</feature>
<feature type="binding site" evidence="1">
    <location>
        <position position="488"/>
    </location>
    <ligand>
        <name>ATP</name>
        <dbReference type="ChEBI" id="CHEBI:30616"/>
    </ligand>
</feature>
<feature type="binding site" evidence="1">
    <location>
        <position position="495"/>
    </location>
    <ligand>
        <name>L-aspartate</name>
        <dbReference type="ChEBI" id="CHEBI:29991"/>
    </ligand>
</feature>
<feature type="binding site" evidence="1">
    <location>
        <begin position="540"/>
        <end position="543"/>
    </location>
    <ligand>
        <name>ATP</name>
        <dbReference type="ChEBI" id="CHEBI:30616"/>
    </ligand>
</feature>
<feature type="site" description="Important for tRNA non-discrimination" evidence="1">
    <location>
        <position position="33"/>
    </location>
</feature>
<name>SYDND_RHIR8</name>
<keyword id="KW-0030">Aminoacyl-tRNA synthetase</keyword>
<keyword id="KW-0067">ATP-binding</keyword>
<keyword id="KW-0963">Cytoplasm</keyword>
<keyword id="KW-0436">Ligase</keyword>
<keyword id="KW-0547">Nucleotide-binding</keyword>
<keyword id="KW-0648">Protein biosynthesis</keyword>
<sequence>MHRYRSHTCAALRKSDVGSTVRISGWVHRVRDHGGVLFIDLRDHYGITQVVADPDSPAFKLAETVRGEWVIRIDGLVKARTEDTVNKTMPTGEIELYAQEIEVLSAAKELPLPIFGEPDYPEDVRLKYRFLDLRRDTLHKNIVKRTQVISSMRRHMGEVGFTEYTTPILTASSPEGARDFLVPSRIHPGTFYALPQAPQQYKQLLMVAGFDRYFQIAPCFRDEDPRADRLPGEFYQLDLEMSFVTQEDVWNTMAPLMTSIFEEFAEGKPVTKEWPRIPYDVAIRKYGSDKPDLRNPIVMEAVTEHFAGSGFKVFANMIASNPKVEVWAIPAKTGGSRAFCDRMNAWAQSQGQPGLGYIFWRKEGEKLEGAGPLAKNIGEERTDAIRTQLGLDDGDACFFVAGDPAKFYKFAGEARTRAGDELNLIDRDRFELCWIVDFPFFEWSEEEKKVDFAHNPFSMPQGGLEALQNQDPLTIKAYQYDAVCNGFEIASGSIRNQSPETMVAAFEKVGLSQADVEERFGGLYRAFQYGAPPHGGAAFGIDRIVMLLVGAKNLREISLFPMNQQAQDLLMGAPSVATPTQLRELAIRPVPPVKKD</sequence>
<accession>B9JCV9</accession>
<dbReference type="EC" id="6.1.1.23" evidence="1"/>
<dbReference type="EMBL" id="CP000628">
    <property type="protein sequence ID" value="ACM26096.1"/>
    <property type="molecule type" value="Genomic_DNA"/>
</dbReference>
<dbReference type="RefSeq" id="WP_007691513.1">
    <property type="nucleotide sequence ID" value="NC_011985.1"/>
</dbReference>
<dbReference type="SMR" id="B9JCV9"/>
<dbReference type="STRING" id="311403.Arad_1734"/>
<dbReference type="GeneID" id="86847976"/>
<dbReference type="KEGG" id="ara:Arad_1734"/>
<dbReference type="eggNOG" id="COG0173">
    <property type="taxonomic scope" value="Bacteria"/>
</dbReference>
<dbReference type="HOGENOM" id="CLU_014330_3_2_5"/>
<dbReference type="Proteomes" id="UP000001600">
    <property type="component" value="Chromosome 1"/>
</dbReference>
<dbReference type="GO" id="GO:0005737">
    <property type="term" value="C:cytoplasm"/>
    <property type="evidence" value="ECO:0007669"/>
    <property type="project" value="UniProtKB-SubCell"/>
</dbReference>
<dbReference type="GO" id="GO:0004815">
    <property type="term" value="F:aspartate-tRNA ligase activity"/>
    <property type="evidence" value="ECO:0007669"/>
    <property type="project" value="UniProtKB-UniRule"/>
</dbReference>
<dbReference type="GO" id="GO:0050560">
    <property type="term" value="F:aspartate-tRNA(Asn) ligase activity"/>
    <property type="evidence" value="ECO:0007669"/>
    <property type="project" value="UniProtKB-EC"/>
</dbReference>
<dbReference type="GO" id="GO:0005524">
    <property type="term" value="F:ATP binding"/>
    <property type="evidence" value="ECO:0007669"/>
    <property type="project" value="UniProtKB-UniRule"/>
</dbReference>
<dbReference type="GO" id="GO:0003676">
    <property type="term" value="F:nucleic acid binding"/>
    <property type="evidence" value="ECO:0007669"/>
    <property type="project" value="InterPro"/>
</dbReference>
<dbReference type="GO" id="GO:0006422">
    <property type="term" value="P:aspartyl-tRNA aminoacylation"/>
    <property type="evidence" value="ECO:0007669"/>
    <property type="project" value="UniProtKB-UniRule"/>
</dbReference>
<dbReference type="CDD" id="cd00777">
    <property type="entry name" value="AspRS_core"/>
    <property type="match status" value="1"/>
</dbReference>
<dbReference type="CDD" id="cd04317">
    <property type="entry name" value="EcAspRS_like_N"/>
    <property type="match status" value="1"/>
</dbReference>
<dbReference type="Gene3D" id="3.30.930.10">
    <property type="entry name" value="Bira Bifunctional Protein, Domain 2"/>
    <property type="match status" value="1"/>
</dbReference>
<dbReference type="Gene3D" id="3.30.1360.30">
    <property type="entry name" value="GAD-like domain"/>
    <property type="match status" value="1"/>
</dbReference>
<dbReference type="Gene3D" id="2.40.50.140">
    <property type="entry name" value="Nucleic acid-binding proteins"/>
    <property type="match status" value="1"/>
</dbReference>
<dbReference type="HAMAP" id="MF_00044">
    <property type="entry name" value="Asp_tRNA_synth_type1"/>
    <property type="match status" value="1"/>
</dbReference>
<dbReference type="InterPro" id="IPR004364">
    <property type="entry name" value="Aa-tRNA-synt_II"/>
</dbReference>
<dbReference type="InterPro" id="IPR006195">
    <property type="entry name" value="aa-tRNA-synth_II"/>
</dbReference>
<dbReference type="InterPro" id="IPR045864">
    <property type="entry name" value="aa-tRNA-synth_II/BPL/LPL"/>
</dbReference>
<dbReference type="InterPro" id="IPR004524">
    <property type="entry name" value="Asp-tRNA-ligase_1"/>
</dbReference>
<dbReference type="InterPro" id="IPR047089">
    <property type="entry name" value="Asp-tRNA-ligase_1_N"/>
</dbReference>
<dbReference type="InterPro" id="IPR002312">
    <property type="entry name" value="Asp/Asn-tRNA-synth_IIb"/>
</dbReference>
<dbReference type="InterPro" id="IPR047090">
    <property type="entry name" value="AspRS_core"/>
</dbReference>
<dbReference type="InterPro" id="IPR004115">
    <property type="entry name" value="GAD-like_sf"/>
</dbReference>
<dbReference type="InterPro" id="IPR029351">
    <property type="entry name" value="GAD_dom"/>
</dbReference>
<dbReference type="InterPro" id="IPR012340">
    <property type="entry name" value="NA-bd_OB-fold"/>
</dbReference>
<dbReference type="InterPro" id="IPR004365">
    <property type="entry name" value="NA-bd_OB_tRNA"/>
</dbReference>
<dbReference type="NCBIfam" id="TIGR00459">
    <property type="entry name" value="aspS_bact"/>
    <property type="match status" value="1"/>
</dbReference>
<dbReference type="NCBIfam" id="NF001750">
    <property type="entry name" value="PRK00476.1"/>
    <property type="match status" value="1"/>
</dbReference>
<dbReference type="PANTHER" id="PTHR22594:SF5">
    <property type="entry name" value="ASPARTATE--TRNA LIGASE, MITOCHONDRIAL"/>
    <property type="match status" value="1"/>
</dbReference>
<dbReference type="PANTHER" id="PTHR22594">
    <property type="entry name" value="ASPARTYL/LYSYL-TRNA SYNTHETASE"/>
    <property type="match status" value="1"/>
</dbReference>
<dbReference type="Pfam" id="PF02938">
    <property type="entry name" value="GAD"/>
    <property type="match status" value="1"/>
</dbReference>
<dbReference type="Pfam" id="PF00152">
    <property type="entry name" value="tRNA-synt_2"/>
    <property type="match status" value="1"/>
</dbReference>
<dbReference type="Pfam" id="PF01336">
    <property type="entry name" value="tRNA_anti-codon"/>
    <property type="match status" value="1"/>
</dbReference>
<dbReference type="PRINTS" id="PR01042">
    <property type="entry name" value="TRNASYNTHASP"/>
</dbReference>
<dbReference type="SUPFAM" id="SSF55681">
    <property type="entry name" value="Class II aaRS and biotin synthetases"/>
    <property type="match status" value="1"/>
</dbReference>
<dbReference type="SUPFAM" id="SSF55261">
    <property type="entry name" value="GAD domain-like"/>
    <property type="match status" value="1"/>
</dbReference>
<dbReference type="SUPFAM" id="SSF50249">
    <property type="entry name" value="Nucleic acid-binding proteins"/>
    <property type="match status" value="1"/>
</dbReference>
<dbReference type="PROSITE" id="PS50862">
    <property type="entry name" value="AA_TRNA_LIGASE_II"/>
    <property type="match status" value="1"/>
</dbReference>
<evidence type="ECO:0000255" key="1">
    <source>
        <dbReference type="HAMAP-Rule" id="MF_00044"/>
    </source>
</evidence>
<gene>
    <name evidence="1" type="primary">aspS</name>
    <name type="ordered locus">Arad_1734</name>
</gene>
<protein>
    <recommendedName>
        <fullName evidence="1">Aspartate--tRNA(Asp/Asn) ligase</fullName>
        <ecNumber evidence="1">6.1.1.23</ecNumber>
    </recommendedName>
    <alternativeName>
        <fullName evidence="1">Aspartyl-tRNA synthetase</fullName>
        <shortName evidence="1">AspRS</shortName>
    </alternativeName>
    <alternativeName>
        <fullName evidence="1">Non-discriminating aspartyl-tRNA synthetase</fullName>
        <shortName evidence="1">ND-AspRS</shortName>
    </alternativeName>
</protein>
<reference key="1">
    <citation type="journal article" date="2009" name="J. Bacteriol.">
        <title>Genome sequences of three Agrobacterium biovars help elucidate the evolution of multichromosome genomes in bacteria.</title>
        <authorList>
            <person name="Slater S.C."/>
            <person name="Goldman B.S."/>
            <person name="Goodner B."/>
            <person name="Setubal J.C."/>
            <person name="Farrand S.K."/>
            <person name="Nester E.W."/>
            <person name="Burr T.J."/>
            <person name="Banta L."/>
            <person name="Dickerman A.W."/>
            <person name="Paulsen I."/>
            <person name="Otten L."/>
            <person name="Suen G."/>
            <person name="Welch R."/>
            <person name="Almeida N.F."/>
            <person name="Arnold F."/>
            <person name="Burton O.T."/>
            <person name="Du Z."/>
            <person name="Ewing A."/>
            <person name="Godsy E."/>
            <person name="Heisel S."/>
            <person name="Houmiel K.L."/>
            <person name="Jhaveri J."/>
            <person name="Lu J."/>
            <person name="Miller N.M."/>
            <person name="Norton S."/>
            <person name="Chen Q."/>
            <person name="Phoolcharoen W."/>
            <person name="Ohlin V."/>
            <person name="Ondrusek D."/>
            <person name="Pride N."/>
            <person name="Stricklin S.L."/>
            <person name="Sun J."/>
            <person name="Wheeler C."/>
            <person name="Wilson L."/>
            <person name="Zhu H."/>
            <person name="Wood D.W."/>
        </authorList>
    </citation>
    <scope>NUCLEOTIDE SEQUENCE [LARGE SCALE GENOMIC DNA]</scope>
    <source>
        <strain>K84 / ATCC BAA-868</strain>
    </source>
</reference>
<comment type="function">
    <text evidence="1">Aspartyl-tRNA synthetase with relaxed tRNA specificity since it is able to aspartylate not only its cognate tRNA(Asp) but also tRNA(Asn). Reaction proceeds in two steps: L-aspartate is first activated by ATP to form Asp-AMP and then transferred to the acceptor end of tRNA(Asp/Asn).</text>
</comment>
<comment type="catalytic activity">
    <reaction evidence="1">
        <text>tRNA(Asx) + L-aspartate + ATP = L-aspartyl-tRNA(Asx) + AMP + diphosphate</text>
        <dbReference type="Rhea" id="RHEA:18349"/>
        <dbReference type="Rhea" id="RHEA-COMP:9710"/>
        <dbReference type="Rhea" id="RHEA-COMP:9711"/>
        <dbReference type="ChEBI" id="CHEBI:29991"/>
        <dbReference type="ChEBI" id="CHEBI:30616"/>
        <dbReference type="ChEBI" id="CHEBI:33019"/>
        <dbReference type="ChEBI" id="CHEBI:78442"/>
        <dbReference type="ChEBI" id="CHEBI:78516"/>
        <dbReference type="ChEBI" id="CHEBI:456215"/>
        <dbReference type="EC" id="6.1.1.23"/>
    </reaction>
</comment>
<comment type="subunit">
    <text evidence="1">Homodimer.</text>
</comment>
<comment type="subcellular location">
    <subcellularLocation>
        <location evidence="1">Cytoplasm</location>
    </subcellularLocation>
</comment>
<comment type="similarity">
    <text evidence="1">Belongs to the class-II aminoacyl-tRNA synthetase family. Type 1 subfamily.</text>
</comment>
<organism>
    <name type="scientific">Rhizobium rhizogenes (strain K84 / ATCC BAA-868)</name>
    <name type="common">Agrobacterium radiobacter</name>
    <dbReference type="NCBI Taxonomy" id="311403"/>
    <lineage>
        <taxon>Bacteria</taxon>
        <taxon>Pseudomonadati</taxon>
        <taxon>Pseudomonadota</taxon>
        <taxon>Alphaproteobacteria</taxon>
        <taxon>Hyphomicrobiales</taxon>
        <taxon>Rhizobiaceae</taxon>
        <taxon>Rhizobium/Agrobacterium group</taxon>
        <taxon>Rhizobium</taxon>
    </lineage>
</organism>
<proteinExistence type="inferred from homology"/>